<protein>
    <recommendedName>
        <fullName evidence="1">Imidazolonepropionase</fullName>
        <ecNumber evidence="1">3.5.2.7</ecNumber>
    </recommendedName>
    <alternativeName>
        <fullName evidence="1">Imidazolone-5-propionate hydrolase</fullName>
    </alternativeName>
</protein>
<feature type="chain" id="PRO_0000306509" description="Imidazolonepropionase">
    <location>
        <begin position="1"/>
        <end position="408"/>
    </location>
</feature>
<feature type="binding site" evidence="1">
    <location>
        <position position="73"/>
    </location>
    <ligand>
        <name>Fe(3+)</name>
        <dbReference type="ChEBI" id="CHEBI:29034"/>
    </ligand>
</feature>
<feature type="binding site" evidence="1">
    <location>
        <position position="73"/>
    </location>
    <ligand>
        <name>Zn(2+)</name>
        <dbReference type="ChEBI" id="CHEBI:29105"/>
    </ligand>
</feature>
<feature type="binding site" evidence="1">
    <location>
        <position position="75"/>
    </location>
    <ligand>
        <name>Fe(3+)</name>
        <dbReference type="ChEBI" id="CHEBI:29034"/>
    </ligand>
</feature>
<feature type="binding site" evidence="1">
    <location>
        <position position="75"/>
    </location>
    <ligand>
        <name>Zn(2+)</name>
        <dbReference type="ChEBI" id="CHEBI:29105"/>
    </ligand>
</feature>
<feature type="binding site" evidence="1">
    <location>
        <position position="82"/>
    </location>
    <ligand>
        <name>4-imidazolone-5-propanoate</name>
        <dbReference type="ChEBI" id="CHEBI:77893"/>
    </ligand>
</feature>
<feature type="binding site" evidence="1">
    <location>
        <position position="145"/>
    </location>
    <ligand>
        <name>4-imidazolone-5-propanoate</name>
        <dbReference type="ChEBI" id="CHEBI:77893"/>
    </ligand>
</feature>
<feature type="binding site" evidence="1">
    <location>
        <position position="145"/>
    </location>
    <ligand>
        <name>N-formimidoyl-L-glutamate</name>
        <dbReference type="ChEBI" id="CHEBI:58928"/>
    </ligand>
</feature>
<feature type="binding site" evidence="1">
    <location>
        <position position="178"/>
    </location>
    <ligand>
        <name>4-imidazolone-5-propanoate</name>
        <dbReference type="ChEBI" id="CHEBI:77893"/>
    </ligand>
</feature>
<feature type="binding site" evidence="1">
    <location>
        <position position="243"/>
    </location>
    <ligand>
        <name>Fe(3+)</name>
        <dbReference type="ChEBI" id="CHEBI:29034"/>
    </ligand>
</feature>
<feature type="binding site" evidence="1">
    <location>
        <position position="243"/>
    </location>
    <ligand>
        <name>Zn(2+)</name>
        <dbReference type="ChEBI" id="CHEBI:29105"/>
    </ligand>
</feature>
<feature type="binding site" evidence="1">
    <location>
        <position position="246"/>
    </location>
    <ligand>
        <name>4-imidazolone-5-propanoate</name>
        <dbReference type="ChEBI" id="CHEBI:77893"/>
    </ligand>
</feature>
<feature type="binding site" evidence="1">
    <location>
        <position position="318"/>
    </location>
    <ligand>
        <name>Fe(3+)</name>
        <dbReference type="ChEBI" id="CHEBI:29034"/>
    </ligand>
</feature>
<feature type="binding site" evidence="1">
    <location>
        <position position="318"/>
    </location>
    <ligand>
        <name>Zn(2+)</name>
        <dbReference type="ChEBI" id="CHEBI:29105"/>
    </ligand>
</feature>
<feature type="binding site" evidence="1">
    <location>
        <position position="320"/>
    </location>
    <ligand>
        <name>N-formimidoyl-L-glutamate</name>
        <dbReference type="ChEBI" id="CHEBI:58928"/>
    </ligand>
</feature>
<feature type="binding site" evidence="1">
    <location>
        <position position="322"/>
    </location>
    <ligand>
        <name>N-formimidoyl-L-glutamate</name>
        <dbReference type="ChEBI" id="CHEBI:58928"/>
    </ligand>
</feature>
<feature type="binding site" evidence="1">
    <location>
        <position position="323"/>
    </location>
    <ligand>
        <name>4-imidazolone-5-propanoate</name>
        <dbReference type="ChEBI" id="CHEBI:77893"/>
    </ligand>
</feature>
<dbReference type="EC" id="3.5.2.7" evidence="1"/>
<dbReference type="EMBL" id="CP000606">
    <property type="protein sequence ID" value="ABO25625.1"/>
    <property type="molecule type" value="Genomic_DNA"/>
</dbReference>
<dbReference type="RefSeq" id="WP_011867553.1">
    <property type="nucleotide sequence ID" value="NC_009092.1"/>
</dbReference>
<dbReference type="SMR" id="A3QJH7"/>
<dbReference type="STRING" id="323850.Shew_3759"/>
<dbReference type="KEGG" id="slo:Shew_3759"/>
<dbReference type="eggNOG" id="COG1228">
    <property type="taxonomic scope" value="Bacteria"/>
</dbReference>
<dbReference type="HOGENOM" id="CLU_041647_0_0_6"/>
<dbReference type="OrthoDB" id="9776455at2"/>
<dbReference type="UniPathway" id="UPA00379">
    <property type="reaction ID" value="UER00551"/>
</dbReference>
<dbReference type="Proteomes" id="UP000001558">
    <property type="component" value="Chromosome"/>
</dbReference>
<dbReference type="GO" id="GO:0005737">
    <property type="term" value="C:cytoplasm"/>
    <property type="evidence" value="ECO:0007669"/>
    <property type="project" value="UniProtKB-SubCell"/>
</dbReference>
<dbReference type="GO" id="GO:0050480">
    <property type="term" value="F:imidazolonepropionase activity"/>
    <property type="evidence" value="ECO:0007669"/>
    <property type="project" value="UniProtKB-UniRule"/>
</dbReference>
<dbReference type="GO" id="GO:0005506">
    <property type="term" value="F:iron ion binding"/>
    <property type="evidence" value="ECO:0007669"/>
    <property type="project" value="UniProtKB-UniRule"/>
</dbReference>
<dbReference type="GO" id="GO:0008270">
    <property type="term" value="F:zinc ion binding"/>
    <property type="evidence" value="ECO:0007669"/>
    <property type="project" value="UniProtKB-UniRule"/>
</dbReference>
<dbReference type="GO" id="GO:0019556">
    <property type="term" value="P:L-histidine catabolic process to glutamate and formamide"/>
    <property type="evidence" value="ECO:0007669"/>
    <property type="project" value="UniProtKB-UniPathway"/>
</dbReference>
<dbReference type="GO" id="GO:0019557">
    <property type="term" value="P:L-histidine catabolic process to glutamate and formate"/>
    <property type="evidence" value="ECO:0007669"/>
    <property type="project" value="UniProtKB-UniPathway"/>
</dbReference>
<dbReference type="CDD" id="cd01296">
    <property type="entry name" value="Imidazolone-5PH"/>
    <property type="match status" value="1"/>
</dbReference>
<dbReference type="FunFam" id="3.20.20.140:FF:000007">
    <property type="entry name" value="Imidazolonepropionase"/>
    <property type="match status" value="1"/>
</dbReference>
<dbReference type="Gene3D" id="3.20.20.140">
    <property type="entry name" value="Metal-dependent hydrolases"/>
    <property type="match status" value="1"/>
</dbReference>
<dbReference type="Gene3D" id="2.30.40.10">
    <property type="entry name" value="Urease, subunit C, domain 1"/>
    <property type="match status" value="1"/>
</dbReference>
<dbReference type="HAMAP" id="MF_00372">
    <property type="entry name" value="HutI"/>
    <property type="match status" value="1"/>
</dbReference>
<dbReference type="InterPro" id="IPR006680">
    <property type="entry name" value="Amidohydro-rel"/>
</dbReference>
<dbReference type="InterPro" id="IPR005920">
    <property type="entry name" value="HutI"/>
</dbReference>
<dbReference type="InterPro" id="IPR011059">
    <property type="entry name" value="Metal-dep_hydrolase_composite"/>
</dbReference>
<dbReference type="InterPro" id="IPR032466">
    <property type="entry name" value="Metal_Hydrolase"/>
</dbReference>
<dbReference type="NCBIfam" id="TIGR01224">
    <property type="entry name" value="hutI"/>
    <property type="match status" value="1"/>
</dbReference>
<dbReference type="PANTHER" id="PTHR42752">
    <property type="entry name" value="IMIDAZOLONEPROPIONASE"/>
    <property type="match status" value="1"/>
</dbReference>
<dbReference type="PANTHER" id="PTHR42752:SF1">
    <property type="entry name" value="IMIDAZOLONEPROPIONASE-RELATED"/>
    <property type="match status" value="1"/>
</dbReference>
<dbReference type="Pfam" id="PF01979">
    <property type="entry name" value="Amidohydro_1"/>
    <property type="match status" value="1"/>
</dbReference>
<dbReference type="SUPFAM" id="SSF51338">
    <property type="entry name" value="Composite domain of metallo-dependent hydrolases"/>
    <property type="match status" value="1"/>
</dbReference>
<dbReference type="SUPFAM" id="SSF51556">
    <property type="entry name" value="Metallo-dependent hydrolases"/>
    <property type="match status" value="1"/>
</dbReference>
<sequence length="408" mass="44120">MSWDQVWIDVNIATMDPEISAPYGAITDAAIAVKEGKIAWMGPRSELPEFDVLSTPVYRGKGGWLTPGLIDAHTHLVFAGNRANEFELRLQGASYEEIARAGGGIISTVKACREASEAELFELGRQRLNALAKEGVTTVEIKSGYGLDTETELKLLRVARELGKHHHVDVKTTFLGAHAIPPEYKDNSDAYVDLVIDEMLTAVINENLADAVDVFCENIAFSLEQTERVLSTAKAAGLDIKLHAEQLSNLGGSAMAAKLGAKSVDHIEYLDEVGVKALSESGTCATLLPGAFYFLRETQMPPIDLLRQYEVPMVLASDYNPGSSPLCSSLLMLNMGCTLFRLTPEEALAGMTRNAAKALGVEDSVGVLKPGMQADFCLWDITTPAALAYSYGVDVCKEVVKNGKLVHQ</sequence>
<comment type="function">
    <text evidence="1">Catalyzes the hydrolytic cleavage of the carbon-nitrogen bond in imidazolone-5-propanoate to yield N-formimidoyl-L-glutamate. It is the third step in the universal histidine degradation pathway.</text>
</comment>
<comment type="catalytic activity">
    <reaction evidence="1">
        <text>4-imidazolone-5-propanoate + H2O = N-formimidoyl-L-glutamate</text>
        <dbReference type="Rhea" id="RHEA:23660"/>
        <dbReference type="ChEBI" id="CHEBI:15377"/>
        <dbReference type="ChEBI" id="CHEBI:58928"/>
        <dbReference type="ChEBI" id="CHEBI:77893"/>
        <dbReference type="EC" id="3.5.2.7"/>
    </reaction>
</comment>
<comment type="cofactor">
    <cofactor evidence="1">
        <name>Zn(2+)</name>
        <dbReference type="ChEBI" id="CHEBI:29105"/>
    </cofactor>
    <cofactor evidence="1">
        <name>Fe(3+)</name>
        <dbReference type="ChEBI" id="CHEBI:29034"/>
    </cofactor>
    <text evidence="1">Binds 1 zinc or iron ion per subunit.</text>
</comment>
<comment type="pathway">
    <text evidence="1">Amino-acid degradation; L-histidine degradation into L-glutamate; N-formimidoyl-L-glutamate from L-histidine: step 3/3.</text>
</comment>
<comment type="subcellular location">
    <subcellularLocation>
        <location evidence="1">Cytoplasm</location>
    </subcellularLocation>
</comment>
<comment type="similarity">
    <text evidence="1">Belongs to the metallo-dependent hydrolases superfamily. HutI family.</text>
</comment>
<keyword id="KW-0963">Cytoplasm</keyword>
<keyword id="KW-0369">Histidine metabolism</keyword>
<keyword id="KW-0378">Hydrolase</keyword>
<keyword id="KW-0408">Iron</keyword>
<keyword id="KW-0479">Metal-binding</keyword>
<keyword id="KW-1185">Reference proteome</keyword>
<keyword id="KW-0862">Zinc</keyword>
<evidence type="ECO:0000255" key="1">
    <source>
        <dbReference type="HAMAP-Rule" id="MF_00372"/>
    </source>
</evidence>
<reference key="1">
    <citation type="submission" date="2007-03" db="EMBL/GenBank/DDBJ databases">
        <title>Complete sequence of Shewanella loihica PV-4.</title>
        <authorList>
            <consortium name="US DOE Joint Genome Institute"/>
            <person name="Copeland A."/>
            <person name="Lucas S."/>
            <person name="Lapidus A."/>
            <person name="Barry K."/>
            <person name="Detter J.C."/>
            <person name="Glavina del Rio T."/>
            <person name="Hammon N."/>
            <person name="Israni S."/>
            <person name="Dalin E."/>
            <person name="Tice H."/>
            <person name="Pitluck S."/>
            <person name="Chain P."/>
            <person name="Malfatti S."/>
            <person name="Shin M."/>
            <person name="Vergez L."/>
            <person name="Schmutz J."/>
            <person name="Larimer F."/>
            <person name="Land M."/>
            <person name="Hauser L."/>
            <person name="Kyrpides N."/>
            <person name="Mikhailova N."/>
            <person name="Romine M.F."/>
            <person name="Serres G."/>
            <person name="Fredrickson J."/>
            <person name="Tiedje J."/>
            <person name="Richardson P."/>
        </authorList>
    </citation>
    <scope>NUCLEOTIDE SEQUENCE [LARGE SCALE GENOMIC DNA]</scope>
    <source>
        <strain>ATCC BAA-1088 / PV-4</strain>
    </source>
</reference>
<accession>A3QJH7</accession>
<name>HUTI_SHELP</name>
<organism>
    <name type="scientific">Shewanella loihica (strain ATCC BAA-1088 / PV-4)</name>
    <dbReference type="NCBI Taxonomy" id="323850"/>
    <lineage>
        <taxon>Bacteria</taxon>
        <taxon>Pseudomonadati</taxon>
        <taxon>Pseudomonadota</taxon>
        <taxon>Gammaproteobacteria</taxon>
        <taxon>Alteromonadales</taxon>
        <taxon>Shewanellaceae</taxon>
        <taxon>Shewanella</taxon>
    </lineage>
</organism>
<gene>
    <name evidence="1" type="primary">hutI</name>
    <name type="ordered locus">Shew_3759</name>
</gene>
<proteinExistence type="inferred from homology"/>